<feature type="signal peptide" evidence="1">
    <location>
        <begin position="1"/>
        <end position="22"/>
    </location>
</feature>
<feature type="chain" id="PRO_0000450968" description="Conotoxin Cal6.24" evidence="3">
    <location>
        <begin position="23"/>
        <end position="64"/>
    </location>
</feature>
<feature type="disulfide bond" evidence="3">
    <location>
        <begin position="32"/>
        <end position="50"/>
    </location>
</feature>
<feature type="disulfide bond" evidence="3">
    <location>
        <begin position="40"/>
        <end position="54"/>
    </location>
</feature>
<feature type="disulfide bond" evidence="3">
    <location>
        <begin position="49"/>
        <end position="60"/>
    </location>
</feature>
<reference key="1">
    <citation type="journal article" date="2019" name="Toxins">
        <title>The diversified O-superfamily in Californiconus californicus presents a conotoxin with antimycobacterial activity.</title>
        <authorList>
            <person name="Bernaldez-Sarabia J."/>
            <person name="Figueroa-Montiel A."/>
            <person name="Duenas S."/>
            <person name="Cervantes-Luevano K."/>
            <person name="Beltran J.A."/>
            <person name="Ortiz E."/>
            <person name="Jimenez S."/>
            <person name="Possani L.D."/>
            <person name="Paniagua-Solis J.F."/>
            <person name="Gonzalez-Canudas J."/>
            <person name="Licea-Navarro A."/>
        </authorList>
    </citation>
    <scope>NUCLEOTIDE SEQUENCE [MRNA]</scope>
    <source>
        <tissue>Venom duct</tissue>
    </source>
</reference>
<comment type="function">
    <text evidence="3">Probable neurotoxin.</text>
</comment>
<comment type="subcellular location">
    <subcellularLocation>
        <location evidence="4">Secreted</location>
    </subcellularLocation>
</comment>
<comment type="tissue specificity">
    <text evidence="4">Expressed by the venom duct.</text>
</comment>
<comment type="domain">
    <text evidence="3">The cysteine framework is VI/VII (C-C-CC-C-C).</text>
</comment>
<comment type="domain">
    <text evidence="3">The presence of a 'disulfide through disulfide knot' structurally defines this protein as a knottin.</text>
</comment>
<sequence>MKLTCVMIVAVLVLTVCKVVTSDQLKKLRRECYLEPGDSCFHDDGRGACCEGTCFFGVACVPWS</sequence>
<accession>P0DTY6</accession>
<keyword id="KW-1015">Disulfide bond</keyword>
<keyword id="KW-0960">Knottin</keyword>
<keyword id="KW-0528">Neurotoxin</keyword>
<keyword id="KW-0964">Secreted</keyword>
<keyword id="KW-0732">Signal</keyword>
<keyword id="KW-0800">Toxin</keyword>
<protein>
    <recommendedName>
        <fullName evidence="3">Conotoxin Cal6.24</fullName>
    </recommendedName>
    <alternativeName>
        <fullName evidence="2">O1_cal6.24</fullName>
    </alternativeName>
</protein>
<dbReference type="GO" id="GO:0005576">
    <property type="term" value="C:extracellular region"/>
    <property type="evidence" value="ECO:0007669"/>
    <property type="project" value="UniProtKB-SubCell"/>
</dbReference>
<dbReference type="GO" id="GO:0090729">
    <property type="term" value="F:toxin activity"/>
    <property type="evidence" value="ECO:0007669"/>
    <property type="project" value="UniProtKB-KW"/>
</dbReference>
<evidence type="ECO:0000255" key="1"/>
<evidence type="ECO:0000303" key="2">
    <source>
    </source>
</evidence>
<evidence type="ECO:0000305" key="3"/>
<evidence type="ECO:0000305" key="4">
    <source>
    </source>
</evidence>
<proteinExistence type="inferred from homology"/>
<name>C624_CONCL</name>
<organism>
    <name type="scientific">Californiconus californicus</name>
    <name type="common">California cone</name>
    <name type="synonym">Conus californicus</name>
    <dbReference type="NCBI Taxonomy" id="1736779"/>
    <lineage>
        <taxon>Eukaryota</taxon>
        <taxon>Metazoa</taxon>
        <taxon>Spiralia</taxon>
        <taxon>Lophotrochozoa</taxon>
        <taxon>Mollusca</taxon>
        <taxon>Gastropoda</taxon>
        <taxon>Caenogastropoda</taxon>
        <taxon>Neogastropoda</taxon>
        <taxon>Conoidea</taxon>
        <taxon>Conidae</taxon>
        <taxon>Californiconus</taxon>
    </lineage>
</organism>